<proteinExistence type="evidence at protein level"/>
<feature type="initiator methionine" description="Removed; by host" evidence="1">
    <location>
        <position position="1"/>
    </location>
</feature>
<feature type="chain" id="PRO_0000039404" description="Protein C'" evidence="7">
    <location>
        <begin position="2"/>
        <end position="215"/>
    </location>
</feature>
<feature type="region of interest" description="Disordered" evidence="2">
    <location>
        <begin position="12"/>
        <end position="34"/>
    </location>
</feature>
<feature type="region of interest" description="Involved in self-degradation and in host STAT1 degradation" evidence="2">
    <location>
        <begin position="15"/>
        <end position="22"/>
    </location>
</feature>
<feature type="splice variant" id="VSP_018941" description="In isoform Y2." evidence="7">
    <location>
        <begin position="1"/>
        <end position="40"/>
    </location>
</feature>
<feature type="splice variant" id="VSP_018940" description="In isoform Y1." evidence="7">
    <location>
        <begin position="1"/>
        <end position="34"/>
    </location>
</feature>
<feature type="splice variant" id="VSP_018939" description="In isoform C." evidence="7">
    <location>
        <begin position="1"/>
        <end position="11"/>
    </location>
</feature>
<feature type="mutagenesis site" description="Complete loss of STAT1-binding." evidence="6">
    <original>F</original>
    <variation>S</variation>
    <location>
        <position position="181"/>
    </location>
</feature>
<keyword id="KW-0024">Alternative initiation</keyword>
<keyword id="KW-1035">Host cytoplasm</keyword>
<keyword id="KW-0945">Host-virus interaction</keyword>
<keyword id="KW-1090">Inhibition of host innate immune response by virus</keyword>
<keyword id="KW-1114">Inhibition of host interferon signaling pathway by virus</keyword>
<keyword id="KW-1105">Inhibition of host STAT1 by virus</keyword>
<keyword id="KW-1106">Inhibition of host STAT2 by virus</keyword>
<keyword id="KW-0922">Interferon antiviral system evasion</keyword>
<keyword id="KW-0899">Viral immunoevasion</keyword>
<accession>P69738</accession>
<organism>
    <name type="scientific">Sendai virus (strain Nagoya)</name>
    <name type="common">SeV</name>
    <dbReference type="NCBI Taxonomy" id="317654"/>
    <lineage>
        <taxon>Viruses</taxon>
        <taxon>Riboviria</taxon>
        <taxon>Orthornavirae</taxon>
        <taxon>Negarnaviricota</taxon>
        <taxon>Haploviricotina</taxon>
        <taxon>Monjiviricetes</taxon>
        <taxon>Mononegavirales</taxon>
        <taxon>Paramyxoviridae</taxon>
        <taxon>Feraresvirinae</taxon>
        <taxon>Respirovirus</taxon>
        <taxon>Respirovirus muris</taxon>
    </lineage>
</organism>
<reference key="1">
    <citation type="submission" date="2004-12" db="EMBL/GenBank/DDBJ databases">
        <authorList>
            <person name="Nishio M."/>
        </authorList>
    </citation>
    <scope>NUCLEOTIDE SEQUENCE [GENOMIC RNA]</scope>
</reference>
<reference key="2">
    <citation type="journal article" date="1999" name="FEBS Lett.">
        <title>Knockout of the Sendai virus C gene eliminates the viral ability to prevent the interferon-alpha/beta-mediated responses.</title>
        <authorList>
            <person name="Gotoh B."/>
            <person name="Takeuchi K."/>
            <person name="Komatsu T."/>
            <person name="Yokoo J."/>
            <person name="Kimura Y."/>
            <person name="Kurotani A."/>
            <person name="Kato A."/>
            <person name="Nagai Y."/>
        </authorList>
    </citation>
    <scope>DISRUPTION PHENOTYPE</scope>
</reference>
<reference key="3">
    <citation type="journal article" date="2001" name="Genes Cells">
        <title>Sendai virus C protein physically associates with Stat1.</title>
        <authorList>
            <person name="Takeuchi K."/>
            <person name="Komatsu T."/>
            <person name="Yokoo J."/>
            <person name="Kato A."/>
            <person name="Shioda T."/>
            <person name="Nagai Y."/>
            <person name="Gotoh B."/>
        </authorList>
    </citation>
    <scope>INTERACTION WITH HUMAN STAT1</scope>
</reference>
<reference key="4">
    <citation type="journal article" date="2003" name="J. Virol.">
        <title>The STAT2 activation process is a crucial target of Sendai virus C protein for the blockade of alpha interferon signaling.</title>
        <authorList>
            <person name="Gotoh B."/>
            <person name="Takeuchi K."/>
            <person name="Komatsu T."/>
            <person name="Yokoo J."/>
        </authorList>
    </citation>
    <scope>FUNCTION</scope>
</reference>
<reference key="5">
    <citation type="journal article" date="2003" name="Virology">
        <title>The C-terminal half-fragment of the Sendai virus C protein prevents the gamma-activated factor from binding to a gamma-activated sequence site.</title>
        <authorList>
            <person name="Gotoh B."/>
            <person name="Komatsu T."/>
            <person name="Takeuchi K."/>
            <person name="Yokoo J."/>
        </authorList>
    </citation>
    <scope>FUNCTION</scope>
    <scope>MUTAGENESIS OF PHE-181</scope>
</reference>
<organismHost>
    <name type="scientific">Cavia cutleri</name>
    <name type="common">Guinea pig</name>
    <dbReference type="NCBI Taxonomy" id="10144"/>
</organismHost>
<organismHost>
    <name type="scientific">Cricetidae sp.</name>
    <name type="common">Hamster</name>
    <dbReference type="NCBI Taxonomy" id="36483"/>
</organismHost>
<organismHost>
    <name type="scientific">Mus musculus</name>
    <name type="common">Mouse</name>
    <dbReference type="NCBI Taxonomy" id="10090"/>
</organismHost>
<organismHost>
    <name type="scientific">Rattus norvegicus</name>
    <name type="common">Rat</name>
    <dbReference type="NCBI Taxonomy" id="10116"/>
</organismHost>
<sequence>MASATLTAWIKMPSFLKKILKLRGRRQEDESRSRMLSDSSMLSCRVNQLTSEGTEAGSTTPSTLPKDQALLIEPKVRAKEKSQHRRPKIIDQVRRVESLGEQASQRQKHMLETLINKIYTGPLGEELVQTLYLRIWTMEETPESLKILQMREDIRDQVLKMKTERWLRTLIRGEKTKLKDFQKRYEEVHPYLMKEKVEQVIMEEAWSLAAHIVQE</sequence>
<comment type="function">
    <text evidence="3 5 6">The different products prevent the establishment of cellular antiviral state by blocking the interferon-alpha/beta (IFN-alpha/beta) and IFN-gamma signaling pathways. They inhibit IFN-alpha/beta induced tyrosine phosphorylation of STAT1 and STAT2. Blocking the IFN-alpha/beta pathway requires binding to STAT1 in the cytoplasm. They inhibit IFN-gamma induced serine phosphorylation of STAT1. Block the IFN-gamma pathway by binding to and stabilizing the parallel form of the STAT1 dimer, further inducing high-molecular-weight complex formation and inhibition of transcription by IFN-gamma (By similarity). May also have a role in preventing the cell to enter apoptosis. Modulate regulation of viral transcription and replication. Overexpression inhibits the viral RNA polymerase. The absence of all C', C, Y1 and Y2 proteins leads to viral delayed growth. Plays an important role in virion particles release. Modulates virion shape.</text>
</comment>
<comment type="subunit">
    <text evidence="3">The different isoforms interact (via C-terminus) with unphosphorylated and phosphorylated human STAT1 (via N-terminus), favoring the formation of parallel STAT1 homodimers. The different isoforms do not interact with host STAT2. C protein interacts with L protein; this interaction has an inhibitory effect on viral transcription and replication.</text>
</comment>
<comment type="subcellular location">
    <subcellularLocation>
        <location evidence="3">Host cytoplasm</location>
    </subcellularLocation>
    <text evidence="3">Protein C' seems to localize around the Golgi.</text>
</comment>
<comment type="alternative products">
    <event type="alternative initiation"/>
    <isoform>
        <id>P69738-1</id>
        <name>C'</name>
        <sequence type="displayed"/>
    </isoform>
    <isoform>
        <id>P69738-2</id>
        <name>C</name>
        <sequence type="described" ref="VSP_018939"/>
    </isoform>
    <isoform>
        <id>P69738-3</id>
        <name>Y1</name>
        <sequence type="described" ref="VSP_018940"/>
    </isoform>
    <isoform>
        <id>P69738-4</id>
        <name>Y2</name>
        <sequence type="described" ref="VSP_018941"/>
    </isoform>
</comment>
<comment type="domain">
    <text evidence="2">The disordered region at the N-terminus is involved in C protein self-degradation in trans. This self-degradation of C protein may play a role in the regulation of viral RNA synthesis. The disordered region at the N-terminus is also involved in the host STAT1 degradation in order to counteract the host innate antiviral response.</text>
</comment>
<comment type="PTM">
    <text evidence="2">Y1 and Y2 proteins are produced not only by alternative initiation, but also by proteolytic cleavage of C'. Only alternative initiation is detected in vitro, whereas in vivo cleavage seems to be predominant.</text>
</comment>
<comment type="disruption phenotype">
    <text evidence="4">Knockout of the 4 isoforms completely abolish the ability to suppress the induction of IFN-alpha-stimulated gene products and the subsequent establishment of an anti-viral state.</text>
</comment>
<comment type="miscellaneous">
    <text evidence="3">The C protein is found in virion at a ratio of approximately 40 molecules per virion, presumably associated with the nucleocapsid.</text>
</comment>
<comment type="miscellaneous">
    <text evidence="7">The P/V/C gene has two overlapping open reading frames. One encodes the P/V/W proteins and the other the C/Y proteins.</text>
</comment>
<comment type="miscellaneous">
    <molecule>Isoform C'</molecule>
    <text>The initiator methionine is coded by an unusual start codon ACG.</text>
</comment>
<comment type="miscellaneous">
    <molecule>Isoform C</molecule>
    <text evidence="7">Most abundant isoform in infected cells.</text>
</comment>
<comment type="similarity">
    <text evidence="7">Belongs to the respirovirus protein C family.</text>
</comment>
<comment type="caution">
    <text evidence="7">The C' protein uses an unusual ACG start codon.</text>
</comment>
<dbReference type="EMBL" id="AB195968">
    <property type="status" value="NOT_ANNOTATED_CDS"/>
    <property type="molecule type" value="Genomic_RNA"/>
</dbReference>
<dbReference type="SMR" id="P69738"/>
<dbReference type="Proteomes" id="UP000120624">
    <property type="component" value="Segment"/>
</dbReference>
<dbReference type="GO" id="GO:0030430">
    <property type="term" value="C:host cell cytoplasm"/>
    <property type="evidence" value="ECO:0007669"/>
    <property type="project" value="UniProtKB-SubCell"/>
</dbReference>
<dbReference type="GO" id="GO:0052170">
    <property type="term" value="P:symbiont-mediated suppression of host innate immune response"/>
    <property type="evidence" value="ECO:0007669"/>
    <property type="project" value="UniProtKB-KW"/>
</dbReference>
<dbReference type="GO" id="GO:0039563">
    <property type="term" value="P:symbiont-mediated suppression of host JAK-STAT cascade via inhibition of STAT1 activity"/>
    <property type="evidence" value="ECO:0000250"/>
    <property type="project" value="UniProtKB"/>
</dbReference>
<dbReference type="GO" id="GO:0039564">
    <property type="term" value="P:symbiont-mediated suppression of host JAK-STAT cascade via inhibition of STAT2 activity"/>
    <property type="evidence" value="ECO:0000314"/>
    <property type="project" value="UniProtKB"/>
</dbReference>
<dbReference type="GO" id="GO:0039502">
    <property type="term" value="P:symbiont-mediated suppression of host type I interferon-mediated signaling pathway"/>
    <property type="evidence" value="ECO:0007669"/>
    <property type="project" value="UniProtKB-KW"/>
</dbReference>
<dbReference type="InterPro" id="IPR002608">
    <property type="entry name" value="Paramyxo_C"/>
</dbReference>
<dbReference type="Pfam" id="PF01692">
    <property type="entry name" value="Paramyxo_C"/>
    <property type="match status" value="1"/>
</dbReference>
<name>C_SENDN</name>
<evidence type="ECO:0000250" key="1"/>
<evidence type="ECO:0000250" key="2">
    <source>
        <dbReference type="UniProtKB" id="P04861"/>
    </source>
</evidence>
<evidence type="ECO:0000250" key="3">
    <source>
        <dbReference type="UniProtKB" id="P04862"/>
    </source>
</evidence>
<evidence type="ECO:0000269" key="4">
    <source>
    </source>
</evidence>
<evidence type="ECO:0000269" key="5">
    <source>
    </source>
</evidence>
<evidence type="ECO:0000269" key="6">
    <source>
    </source>
</evidence>
<evidence type="ECO:0000305" key="7"/>
<gene>
    <name type="primary">P/V/C</name>
</gene>
<protein>
    <recommendedName>
        <fullName>Protein C'</fullName>
    </recommendedName>
</protein>